<gene>
    <name type="primary">CecA2</name>
</gene>
<reference key="1">
    <citation type="journal article" date="1998" name="Immunogenetics">
        <title>Evolutionary history and mechanism of the Drosophila cecropin gene family.</title>
        <authorList>
            <person name="Date A."/>
            <person name="Satta Y."/>
            <person name="Takahata N."/>
            <person name="Chigusa S.I."/>
        </authorList>
    </citation>
    <scope>NUCLEOTIDE SEQUENCE [GENOMIC DNA]</scope>
</reference>
<keyword id="KW-0027">Amidation</keyword>
<keyword id="KW-0044">Antibiotic</keyword>
<keyword id="KW-0929">Antimicrobial</keyword>
<keyword id="KW-0391">Immunity</keyword>
<keyword id="KW-0399">Innate immunity</keyword>
<keyword id="KW-0964">Secreted</keyword>
<accession>O61281</accession>
<dbReference type="EMBL" id="AB010798">
    <property type="protein sequence ID" value="BAA28744.1"/>
    <property type="molecule type" value="Genomic_DNA"/>
</dbReference>
<dbReference type="SMR" id="O61281"/>
<dbReference type="EnsemblMetazoa" id="FBtr0257384">
    <property type="protein sequence ID" value="FBpp0255876"/>
    <property type="gene ID" value="FBgn0228701"/>
</dbReference>
<dbReference type="EnsemblMetazoa" id="XM_002099334.4">
    <property type="protein sequence ID" value="XP_002099370.1"/>
    <property type="gene ID" value="LOC6538864"/>
</dbReference>
<dbReference type="OrthoDB" id="7410372at2759"/>
<dbReference type="GO" id="GO:0005576">
    <property type="term" value="C:extracellular region"/>
    <property type="evidence" value="ECO:0000250"/>
    <property type="project" value="UniProtKB"/>
</dbReference>
<dbReference type="GO" id="GO:0005615">
    <property type="term" value="C:extracellular space"/>
    <property type="evidence" value="ECO:0007669"/>
    <property type="project" value="TreeGrafter"/>
</dbReference>
<dbReference type="GO" id="GO:0019731">
    <property type="term" value="P:antibacterial humoral response"/>
    <property type="evidence" value="ECO:0007669"/>
    <property type="project" value="InterPro"/>
</dbReference>
<dbReference type="GO" id="GO:0050829">
    <property type="term" value="P:defense response to Gram-negative bacterium"/>
    <property type="evidence" value="ECO:0007669"/>
    <property type="project" value="UniProtKB-ARBA"/>
</dbReference>
<dbReference type="GO" id="GO:0050830">
    <property type="term" value="P:defense response to Gram-positive bacterium"/>
    <property type="evidence" value="ECO:0007669"/>
    <property type="project" value="TreeGrafter"/>
</dbReference>
<dbReference type="GO" id="GO:0045087">
    <property type="term" value="P:innate immune response"/>
    <property type="evidence" value="ECO:0007669"/>
    <property type="project" value="UniProtKB-KW"/>
</dbReference>
<dbReference type="InterPro" id="IPR000875">
    <property type="entry name" value="Cecropin"/>
</dbReference>
<dbReference type="InterPro" id="IPR020400">
    <property type="entry name" value="Cecropin_insect"/>
</dbReference>
<dbReference type="PANTHER" id="PTHR38329">
    <property type="entry name" value="CECROPIN-A1-RELATED"/>
    <property type="match status" value="1"/>
</dbReference>
<dbReference type="PANTHER" id="PTHR38329:SF1">
    <property type="entry name" value="CECROPIN-A1-RELATED"/>
    <property type="match status" value="1"/>
</dbReference>
<dbReference type="Pfam" id="PF00272">
    <property type="entry name" value="Cecropin"/>
    <property type="match status" value="1"/>
</dbReference>
<dbReference type="PROSITE" id="PS00268">
    <property type="entry name" value="CECROPIN"/>
    <property type="match status" value="1"/>
</dbReference>
<name>CECA2_DROYA</name>
<comment type="function">
    <text>Cecropins have lytic and antibacterial activity against several Gram-positive and Gram-negative bacteria.</text>
</comment>
<comment type="subcellular location">
    <subcellularLocation>
        <location>Secreted</location>
    </subcellularLocation>
</comment>
<comment type="similarity">
    <text evidence="2">Belongs to the cecropin family.</text>
</comment>
<feature type="chain" id="PRO_0000127103" description="Cecropin-A2">
    <location>
        <begin position="1" status="less than"/>
        <end position="55"/>
    </location>
</feature>
<feature type="modified residue" description="Arginine amide" evidence="1">
    <location>
        <position position="55"/>
    </location>
</feature>
<feature type="non-terminal residue">
    <location>
        <position position="1"/>
    </location>
</feature>
<proteinExistence type="inferred from homology"/>
<evidence type="ECO:0000250" key="1"/>
<evidence type="ECO:0000305" key="2"/>
<organism>
    <name type="scientific">Drosophila yakuba</name>
    <name type="common">Fruit fly</name>
    <dbReference type="NCBI Taxonomy" id="7245"/>
    <lineage>
        <taxon>Eukaryota</taxon>
        <taxon>Metazoa</taxon>
        <taxon>Ecdysozoa</taxon>
        <taxon>Arthropoda</taxon>
        <taxon>Hexapoda</taxon>
        <taxon>Insecta</taxon>
        <taxon>Pterygota</taxon>
        <taxon>Neoptera</taxon>
        <taxon>Endopterygota</taxon>
        <taxon>Diptera</taxon>
        <taxon>Brachycera</taxon>
        <taxon>Muscomorpha</taxon>
        <taxon>Ephydroidea</taxon>
        <taxon>Drosophilidae</taxon>
        <taxon>Drosophila</taxon>
        <taxon>Sophophora</taxon>
    </lineage>
</organism>
<protein>
    <recommendedName>
        <fullName>Cecropin-A2</fullName>
    </recommendedName>
</protein>
<sequence>VFVALILAIAIGQSEAGWLKKIGKKIERVGQHTRDATIQGLGIAQQAANVAATARG</sequence>